<protein>
    <recommendedName>
        <fullName evidence="1">Adenine phosphoribosyltransferase</fullName>
        <shortName evidence="1">APRT</shortName>
        <ecNumber evidence="1">2.4.2.7</ecNumber>
    </recommendedName>
</protein>
<organism>
    <name type="scientific">Bdellovibrio bacteriovorus (strain ATCC 15356 / DSM 50701 / NCIMB 9529 / HD100)</name>
    <dbReference type="NCBI Taxonomy" id="264462"/>
    <lineage>
        <taxon>Bacteria</taxon>
        <taxon>Pseudomonadati</taxon>
        <taxon>Bdellovibrionota</taxon>
        <taxon>Bdellovibrionia</taxon>
        <taxon>Bdellovibrionales</taxon>
        <taxon>Pseudobdellovibrionaceae</taxon>
        <taxon>Bdellovibrio</taxon>
    </lineage>
</organism>
<gene>
    <name evidence="1" type="primary">apt</name>
    <name type="ordered locus">Bd0845</name>
</gene>
<comment type="function">
    <text evidence="1">Catalyzes a salvage reaction resulting in the formation of AMP, that is energically less costly than de novo synthesis.</text>
</comment>
<comment type="catalytic activity">
    <reaction evidence="1">
        <text>AMP + diphosphate = 5-phospho-alpha-D-ribose 1-diphosphate + adenine</text>
        <dbReference type="Rhea" id="RHEA:16609"/>
        <dbReference type="ChEBI" id="CHEBI:16708"/>
        <dbReference type="ChEBI" id="CHEBI:33019"/>
        <dbReference type="ChEBI" id="CHEBI:58017"/>
        <dbReference type="ChEBI" id="CHEBI:456215"/>
        <dbReference type="EC" id="2.4.2.7"/>
    </reaction>
</comment>
<comment type="pathway">
    <text evidence="1">Purine metabolism; AMP biosynthesis via salvage pathway; AMP from adenine: step 1/1.</text>
</comment>
<comment type="subunit">
    <text evidence="1">Homodimer.</text>
</comment>
<comment type="subcellular location">
    <subcellularLocation>
        <location evidence="1">Cytoplasm</location>
    </subcellularLocation>
</comment>
<comment type="similarity">
    <text evidence="1">Belongs to the purine/pyrimidine phosphoribosyltransferase family.</text>
</comment>
<keyword id="KW-0963">Cytoplasm</keyword>
<keyword id="KW-0328">Glycosyltransferase</keyword>
<keyword id="KW-0660">Purine salvage</keyword>
<keyword id="KW-1185">Reference proteome</keyword>
<keyword id="KW-0808">Transferase</keyword>
<dbReference type="EC" id="2.4.2.7" evidence="1"/>
<dbReference type="EMBL" id="BX842648">
    <property type="protein sequence ID" value="CAE78790.1"/>
    <property type="molecule type" value="Genomic_DNA"/>
</dbReference>
<dbReference type="RefSeq" id="WP_011163392.1">
    <property type="nucleotide sequence ID" value="NC_005363.1"/>
</dbReference>
<dbReference type="SMR" id="Q6MPK7"/>
<dbReference type="STRING" id="264462.Bd0845"/>
<dbReference type="GeneID" id="93011917"/>
<dbReference type="KEGG" id="bba:Bd0845"/>
<dbReference type="eggNOG" id="COG0503">
    <property type="taxonomic scope" value="Bacteria"/>
</dbReference>
<dbReference type="HOGENOM" id="CLU_063339_3_3_7"/>
<dbReference type="UniPathway" id="UPA00588">
    <property type="reaction ID" value="UER00646"/>
</dbReference>
<dbReference type="Proteomes" id="UP000008080">
    <property type="component" value="Chromosome"/>
</dbReference>
<dbReference type="GO" id="GO:0005737">
    <property type="term" value="C:cytoplasm"/>
    <property type="evidence" value="ECO:0007669"/>
    <property type="project" value="UniProtKB-SubCell"/>
</dbReference>
<dbReference type="GO" id="GO:0002055">
    <property type="term" value="F:adenine binding"/>
    <property type="evidence" value="ECO:0007669"/>
    <property type="project" value="TreeGrafter"/>
</dbReference>
<dbReference type="GO" id="GO:0003999">
    <property type="term" value="F:adenine phosphoribosyltransferase activity"/>
    <property type="evidence" value="ECO:0007669"/>
    <property type="project" value="UniProtKB-UniRule"/>
</dbReference>
<dbReference type="GO" id="GO:0016208">
    <property type="term" value="F:AMP binding"/>
    <property type="evidence" value="ECO:0007669"/>
    <property type="project" value="TreeGrafter"/>
</dbReference>
<dbReference type="GO" id="GO:0006168">
    <property type="term" value="P:adenine salvage"/>
    <property type="evidence" value="ECO:0007669"/>
    <property type="project" value="InterPro"/>
</dbReference>
<dbReference type="GO" id="GO:0044209">
    <property type="term" value="P:AMP salvage"/>
    <property type="evidence" value="ECO:0007669"/>
    <property type="project" value="UniProtKB-UniRule"/>
</dbReference>
<dbReference type="GO" id="GO:0006166">
    <property type="term" value="P:purine ribonucleoside salvage"/>
    <property type="evidence" value="ECO:0007669"/>
    <property type="project" value="UniProtKB-KW"/>
</dbReference>
<dbReference type="CDD" id="cd06223">
    <property type="entry name" value="PRTases_typeI"/>
    <property type="match status" value="1"/>
</dbReference>
<dbReference type="FunFam" id="3.40.50.2020:FF:000004">
    <property type="entry name" value="Adenine phosphoribosyltransferase"/>
    <property type="match status" value="1"/>
</dbReference>
<dbReference type="Gene3D" id="3.40.50.2020">
    <property type="match status" value="1"/>
</dbReference>
<dbReference type="HAMAP" id="MF_00004">
    <property type="entry name" value="Aden_phosphoribosyltr"/>
    <property type="match status" value="1"/>
</dbReference>
<dbReference type="InterPro" id="IPR005764">
    <property type="entry name" value="Ade_phspho_trans"/>
</dbReference>
<dbReference type="InterPro" id="IPR000836">
    <property type="entry name" value="PRibTrfase_dom"/>
</dbReference>
<dbReference type="InterPro" id="IPR029057">
    <property type="entry name" value="PRTase-like"/>
</dbReference>
<dbReference type="InterPro" id="IPR050054">
    <property type="entry name" value="UPRTase/APRTase"/>
</dbReference>
<dbReference type="NCBIfam" id="NF002636">
    <property type="entry name" value="PRK02304.1-5"/>
    <property type="match status" value="1"/>
</dbReference>
<dbReference type="PANTHER" id="PTHR32315">
    <property type="entry name" value="ADENINE PHOSPHORIBOSYLTRANSFERASE"/>
    <property type="match status" value="1"/>
</dbReference>
<dbReference type="PANTHER" id="PTHR32315:SF3">
    <property type="entry name" value="ADENINE PHOSPHORIBOSYLTRANSFERASE"/>
    <property type="match status" value="1"/>
</dbReference>
<dbReference type="Pfam" id="PF00156">
    <property type="entry name" value="Pribosyltran"/>
    <property type="match status" value="1"/>
</dbReference>
<dbReference type="SUPFAM" id="SSF53271">
    <property type="entry name" value="PRTase-like"/>
    <property type="match status" value="1"/>
</dbReference>
<dbReference type="PROSITE" id="PS00103">
    <property type="entry name" value="PUR_PYR_PR_TRANSFER"/>
    <property type="match status" value="1"/>
</dbReference>
<evidence type="ECO:0000255" key="1">
    <source>
        <dbReference type="HAMAP-Rule" id="MF_00004"/>
    </source>
</evidence>
<sequence length="165" mass="18006">MDLKSLIRDVPDFPKPGIIFRDMSPLLQNAEALSFVSHNLLKHVDLTHVDYFAGIESRGFILAAHMAATHKKGFLPIRKAGKLPPPTRKVSYALEYGTAEIELPPGRGNVVIVDDVLATGGTLQAAIDLCLLAGYSVESVAVLVNLTFLNKMTYNDQKVASLVQY</sequence>
<reference key="1">
    <citation type="journal article" date="2004" name="Science">
        <title>A predator unmasked: life cycle of Bdellovibrio bacteriovorus from a genomic perspective.</title>
        <authorList>
            <person name="Rendulic S."/>
            <person name="Jagtap P."/>
            <person name="Rosinus A."/>
            <person name="Eppinger M."/>
            <person name="Baar C."/>
            <person name="Lanz C."/>
            <person name="Keller H."/>
            <person name="Lambert C."/>
            <person name="Evans K.J."/>
            <person name="Goesmann A."/>
            <person name="Meyer F."/>
            <person name="Sockett R.E."/>
            <person name="Schuster S.C."/>
        </authorList>
    </citation>
    <scope>NUCLEOTIDE SEQUENCE [LARGE SCALE GENOMIC DNA]</scope>
    <source>
        <strain>ATCC 15356 / DSM 50701 / NCIMB 9529 / HD100</strain>
    </source>
</reference>
<accession>Q6MPK7</accession>
<name>APT_BDEBA</name>
<feature type="chain" id="PRO_0000149356" description="Adenine phosphoribosyltransferase">
    <location>
        <begin position="1"/>
        <end position="165"/>
    </location>
</feature>
<proteinExistence type="inferred from homology"/>